<comment type="function">
    <text evidence="1">Binds directly to 23S rRNA. The L1 stalk is quite mobile in the ribosome, and is involved in E site tRNA release.</text>
</comment>
<comment type="function">
    <text evidence="1">Protein L1 is also a translational repressor protein, it controls the translation of the L11 operon by binding to its mRNA.</text>
</comment>
<comment type="subunit">
    <text evidence="1">Part of the 50S ribosomal subunit.</text>
</comment>
<comment type="similarity">
    <text evidence="1">Belongs to the universal ribosomal protein uL1 family.</text>
</comment>
<protein>
    <recommendedName>
        <fullName evidence="1">Large ribosomal subunit protein uL1</fullName>
    </recommendedName>
    <alternativeName>
        <fullName evidence="2">50S ribosomal protein L1</fullName>
    </alternativeName>
</protein>
<sequence length="229" mass="24351">MAKKSKQMLAALEKVDSTKAYSVEEAVALVKETNFAKFDASVEVAYNLNIDVRKADQQIRGAMVLPNGTGKTQRVLVFARGAKAEEAKAAGADFVGEDDLVAKINGGWLDFDVVIATPDMMAIVGRLGRVLGPRNLMPNPKTGTVTMDVAKAVEESKGGKITYRADKAGNVQALIGKVSFDADKLVENFKAFHDVMAKAKPATAKGTYMANVSITSTQGVGIKVDPNSL</sequence>
<proteinExistence type="inferred from homology"/>
<keyword id="KW-0678">Repressor</keyword>
<keyword id="KW-0687">Ribonucleoprotein</keyword>
<keyword id="KW-0689">Ribosomal protein</keyword>
<keyword id="KW-0694">RNA-binding</keyword>
<keyword id="KW-0699">rRNA-binding</keyword>
<keyword id="KW-0810">Translation regulation</keyword>
<keyword id="KW-0820">tRNA-binding</keyword>
<reference key="1">
    <citation type="journal article" date="2003" name="Genome Res.">
        <title>Genome sequence of an M3 strain of Streptococcus pyogenes reveals a large-scale genomic rearrangement in invasive strains and new insights into phage evolution.</title>
        <authorList>
            <person name="Nakagawa I."/>
            <person name="Kurokawa K."/>
            <person name="Yamashita A."/>
            <person name="Nakata M."/>
            <person name="Tomiyasu Y."/>
            <person name="Okahashi N."/>
            <person name="Kawabata S."/>
            <person name="Yamazaki K."/>
            <person name="Shiba T."/>
            <person name="Yasunaga T."/>
            <person name="Hayashi H."/>
            <person name="Hattori M."/>
            <person name="Hamada S."/>
        </authorList>
    </citation>
    <scope>NUCLEOTIDE SEQUENCE [LARGE SCALE GENOMIC DNA]</scope>
    <source>
        <strain>SSI-1</strain>
    </source>
</reference>
<feature type="chain" id="PRO_0000411498" description="Large ribosomal subunit protein uL1">
    <location>
        <begin position="1"/>
        <end position="229"/>
    </location>
</feature>
<gene>
    <name evidence="1" type="primary">rplA</name>
    <name type="ordered locus">SPs1532</name>
</gene>
<evidence type="ECO:0000255" key="1">
    <source>
        <dbReference type="HAMAP-Rule" id="MF_01318"/>
    </source>
</evidence>
<evidence type="ECO:0000305" key="2"/>
<accession>P0DE17</accession>
<accession>Q8K8E6</accession>
<name>RL1_STRPQ</name>
<organism>
    <name type="scientific">Streptococcus pyogenes serotype M3 (strain SSI-1)</name>
    <dbReference type="NCBI Taxonomy" id="193567"/>
    <lineage>
        <taxon>Bacteria</taxon>
        <taxon>Bacillati</taxon>
        <taxon>Bacillota</taxon>
        <taxon>Bacilli</taxon>
        <taxon>Lactobacillales</taxon>
        <taxon>Streptococcaceae</taxon>
        <taxon>Streptococcus</taxon>
    </lineage>
</organism>
<dbReference type="EMBL" id="BA000034">
    <property type="protein sequence ID" value="BAC64627.1"/>
    <property type="molecule type" value="Genomic_DNA"/>
</dbReference>
<dbReference type="RefSeq" id="WP_011054242.1">
    <property type="nucleotide sequence ID" value="NC_004606.1"/>
</dbReference>
<dbReference type="SMR" id="P0DE17"/>
<dbReference type="KEGG" id="sps:SPs1532"/>
<dbReference type="HOGENOM" id="CLU_062853_0_0_9"/>
<dbReference type="GO" id="GO:0015934">
    <property type="term" value="C:large ribosomal subunit"/>
    <property type="evidence" value="ECO:0007669"/>
    <property type="project" value="InterPro"/>
</dbReference>
<dbReference type="GO" id="GO:0019843">
    <property type="term" value="F:rRNA binding"/>
    <property type="evidence" value="ECO:0007669"/>
    <property type="project" value="UniProtKB-UniRule"/>
</dbReference>
<dbReference type="GO" id="GO:0003735">
    <property type="term" value="F:structural constituent of ribosome"/>
    <property type="evidence" value="ECO:0007669"/>
    <property type="project" value="InterPro"/>
</dbReference>
<dbReference type="GO" id="GO:0000049">
    <property type="term" value="F:tRNA binding"/>
    <property type="evidence" value="ECO:0007669"/>
    <property type="project" value="UniProtKB-KW"/>
</dbReference>
<dbReference type="GO" id="GO:0006417">
    <property type="term" value="P:regulation of translation"/>
    <property type="evidence" value="ECO:0007669"/>
    <property type="project" value="UniProtKB-KW"/>
</dbReference>
<dbReference type="GO" id="GO:0006412">
    <property type="term" value="P:translation"/>
    <property type="evidence" value="ECO:0007669"/>
    <property type="project" value="UniProtKB-UniRule"/>
</dbReference>
<dbReference type="CDD" id="cd00403">
    <property type="entry name" value="Ribosomal_L1"/>
    <property type="match status" value="1"/>
</dbReference>
<dbReference type="FunFam" id="3.40.50.790:FF:000001">
    <property type="entry name" value="50S ribosomal protein L1"/>
    <property type="match status" value="1"/>
</dbReference>
<dbReference type="Gene3D" id="3.30.190.20">
    <property type="match status" value="1"/>
</dbReference>
<dbReference type="Gene3D" id="3.40.50.790">
    <property type="match status" value="1"/>
</dbReference>
<dbReference type="HAMAP" id="MF_01318_B">
    <property type="entry name" value="Ribosomal_uL1_B"/>
    <property type="match status" value="1"/>
</dbReference>
<dbReference type="InterPro" id="IPR005878">
    <property type="entry name" value="Ribosom_uL1_bac-type"/>
</dbReference>
<dbReference type="InterPro" id="IPR002143">
    <property type="entry name" value="Ribosomal_uL1"/>
</dbReference>
<dbReference type="InterPro" id="IPR023674">
    <property type="entry name" value="Ribosomal_uL1-like"/>
</dbReference>
<dbReference type="InterPro" id="IPR028364">
    <property type="entry name" value="Ribosomal_uL1/biogenesis"/>
</dbReference>
<dbReference type="InterPro" id="IPR016095">
    <property type="entry name" value="Ribosomal_uL1_3-a/b-sand"/>
</dbReference>
<dbReference type="InterPro" id="IPR023673">
    <property type="entry name" value="Ribosomal_uL1_CS"/>
</dbReference>
<dbReference type="NCBIfam" id="TIGR01169">
    <property type="entry name" value="rplA_bact"/>
    <property type="match status" value="1"/>
</dbReference>
<dbReference type="PANTHER" id="PTHR36427">
    <property type="entry name" value="54S RIBOSOMAL PROTEIN L1, MITOCHONDRIAL"/>
    <property type="match status" value="1"/>
</dbReference>
<dbReference type="PANTHER" id="PTHR36427:SF3">
    <property type="entry name" value="LARGE RIBOSOMAL SUBUNIT PROTEIN UL1M"/>
    <property type="match status" value="1"/>
</dbReference>
<dbReference type="Pfam" id="PF00687">
    <property type="entry name" value="Ribosomal_L1"/>
    <property type="match status" value="1"/>
</dbReference>
<dbReference type="PIRSF" id="PIRSF002155">
    <property type="entry name" value="Ribosomal_L1"/>
    <property type="match status" value="1"/>
</dbReference>
<dbReference type="SUPFAM" id="SSF56808">
    <property type="entry name" value="Ribosomal protein L1"/>
    <property type="match status" value="1"/>
</dbReference>
<dbReference type="PROSITE" id="PS01199">
    <property type="entry name" value="RIBOSOMAL_L1"/>
    <property type="match status" value="1"/>
</dbReference>